<reference key="1">
    <citation type="journal article" date="2008" name="Appl. Environ. Microbiol.">
        <title>Genome of the epsilonproteobacterial chemolithoautotroph Sulfurimonas denitrificans.</title>
        <authorList>
            <person name="Sievert S.M."/>
            <person name="Scott K.M."/>
            <person name="Klotz M.G."/>
            <person name="Chain P.S.G."/>
            <person name="Hauser L.J."/>
            <person name="Hemp J."/>
            <person name="Huegler M."/>
            <person name="Land M."/>
            <person name="Lapidus A."/>
            <person name="Larimer F.W."/>
            <person name="Lucas S."/>
            <person name="Malfatti S.A."/>
            <person name="Meyer F."/>
            <person name="Paulsen I.T."/>
            <person name="Ren Q."/>
            <person name="Simon J."/>
            <person name="Bailey K."/>
            <person name="Diaz E."/>
            <person name="Fitzpatrick K.A."/>
            <person name="Glover B."/>
            <person name="Gwatney N."/>
            <person name="Korajkic A."/>
            <person name="Long A."/>
            <person name="Mobberley J.M."/>
            <person name="Pantry S.N."/>
            <person name="Pazder G."/>
            <person name="Peterson S."/>
            <person name="Quintanilla J.D."/>
            <person name="Sprinkle R."/>
            <person name="Stephens J."/>
            <person name="Thomas P."/>
            <person name="Vaughn R."/>
            <person name="Weber M.J."/>
            <person name="Wooten L.L."/>
        </authorList>
    </citation>
    <scope>NUCLEOTIDE SEQUENCE [LARGE SCALE GENOMIC DNA]</scope>
    <source>
        <strain>ATCC 33889 / DSM 1251</strain>
    </source>
</reference>
<keyword id="KW-0028">Amino-acid biosynthesis</keyword>
<keyword id="KW-0067">ATP-binding</keyword>
<keyword id="KW-0963">Cytoplasm</keyword>
<keyword id="KW-0328">Glycosyltransferase</keyword>
<keyword id="KW-0368">Histidine biosynthesis</keyword>
<keyword id="KW-0547">Nucleotide-binding</keyword>
<keyword id="KW-1185">Reference proteome</keyword>
<keyword id="KW-0808">Transferase</keyword>
<evidence type="ECO:0000255" key="1">
    <source>
        <dbReference type="HAMAP-Rule" id="MF_01018"/>
    </source>
</evidence>
<feature type="chain" id="PRO_0000229339" description="ATP phosphoribosyltransferase">
    <location>
        <begin position="1"/>
        <end position="209"/>
    </location>
</feature>
<accession>Q30S64</accession>
<organism>
    <name type="scientific">Sulfurimonas denitrificans (strain ATCC 33889 / DSM 1251)</name>
    <name type="common">Thiomicrospira denitrificans (strain ATCC 33889 / DSM 1251)</name>
    <dbReference type="NCBI Taxonomy" id="326298"/>
    <lineage>
        <taxon>Bacteria</taxon>
        <taxon>Pseudomonadati</taxon>
        <taxon>Campylobacterota</taxon>
        <taxon>Epsilonproteobacteria</taxon>
        <taxon>Campylobacterales</taxon>
        <taxon>Sulfurimonadaceae</taxon>
        <taxon>Sulfurimonas</taxon>
    </lineage>
</organism>
<protein>
    <recommendedName>
        <fullName evidence="1">ATP phosphoribosyltransferase</fullName>
        <shortName evidence="1">ATP-PRT</shortName>
        <shortName evidence="1">ATP-PRTase</shortName>
        <ecNumber evidence="1">2.4.2.17</ecNumber>
    </recommendedName>
</protein>
<proteinExistence type="inferred from homology"/>
<sequence length="209" mass="23463">MLTVALPKGRIAQETLEIFETLFGDGFAFDDRKLILETPKFRFLLVRNQDVATYVFHQAADIGVVGLDTLEEQGLDVIRLLDLKRGICKVAIGMKKGEKFDLNKPEIKVASKMVNITKRYFEERAVSVDIIKLYGSIELAPLIGLADMIVDVVETGSTMKQNGLEVVEDIMTSSTYLIANKNSYIAKKDEVLDIYEKIKSVIDAEQKIK</sequence>
<name>HIS1_SULDN</name>
<dbReference type="EC" id="2.4.2.17" evidence="1"/>
<dbReference type="EMBL" id="CP000153">
    <property type="protein sequence ID" value="ABB44167.1"/>
    <property type="molecule type" value="Genomic_DNA"/>
</dbReference>
<dbReference type="RefSeq" id="WP_011372519.1">
    <property type="nucleotide sequence ID" value="NC_007575.1"/>
</dbReference>
<dbReference type="SMR" id="Q30S64"/>
<dbReference type="STRING" id="326298.Suden_0889"/>
<dbReference type="KEGG" id="tdn:Suden_0889"/>
<dbReference type="eggNOG" id="COG0040">
    <property type="taxonomic scope" value="Bacteria"/>
</dbReference>
<dbReference type="HOGENOM" id="CLU_038115_2_0_7"/>
<dbReference type="OrthoDB" id="9801867at2"/>
<dbReference type="UniPathway" id="UPA00031">
    <property type="reaction ID" value="UER00006"/>
</dbReference>
<dbReference type="Proteomes" id="UP000002714">
    <property type="component" value="Chromosome"/>
</dbReference>
<dbReference type="GO" id="GO:0005737">
    <property type="term" value="C:cytoplasm"/>
    <property type="evidence" value="ECO:0007669"/>
    <property type="project" value="UniProtKB-SubCell"/>
</dbReference>
<dbReference type="GO" id="GO:0005524">
    <property type="term" value="F:ATP binding"/>
    <property type="evidence" value="ECO:0007669"/>
    <property type="project" value="UniProtKB-KW"/>
</dbReference>
<dbReference type="GO" id="GO:0003879">
    <property type="term" value="F:ATP phosphoribosyltransferase activity"/>
    <property type="evidence" value="ECO:0007669"/>
    <property type="project" value="UniProtKB-UniRule"/>
</dbReference>
<dbReference type="GO" id="GO:0000105">
    <property type="term" value="P:L-histidine biosynthetic process"/>
    <property type="evidence" value="ECO:0007669"/>
    <property type="project" value="UniProtKB-UniRule"/>
</dbReference>
<dbReference type="CDD" id="cd13595">
    <property type="entry name" value="PBP2_HisGs"/>
    <property type="match status" value="1"/>
</dbReference>
<dbReference type="FunFam" id="3.40.190.10:FF:000008">
    <property type="entry name" value="ATP phosphoribosyltransferase"/>
    <property type="match status" value="1"/>
</dbReference>
<dbReference type="Gene3D" id="3.40.190.10">
    <property type="entry name" value="Periplasmic binding protein-like II"/>
    <property type="match status" value="2"/>
</dbReference>
<dbReference type="HAMAP" id="MF_01018">
    <property type="entry name" value="HisG_Short"/>
    <property type="match status" value="1"/>
</dbReference>
<dbReference type="InterPro" id="IPR013820">
    <property type="entry name" value="ATP_PRibTrfase_cat"/>
</dbReference>
<dbReference type="InterPro" id="IPR018198">
    <property type="entry name" value="ATP_PRibTrfase_CS"/>
</dbReference>
<dbReference type="InterPro" id="IPR001348">
    <property type="entry name" value="ATP_PRibTrfase_HisG"/>
</dbReference>
<dbReference type="InterPro" id="IPR024893">
    <property type="entry name" value="ATP_PRibTrfase_HisG_short"/>
</dbReference>
<dbReference type="NCBIfam" id="TIGR00070">
    <property type="entry name" value="hisG"/>
    <property type="match status" value="1"/>
</dbReference>
<dbReference type="PANTHER" id="PTHR21403:SF8">
    <property type="entry name" value="ATP PHOSPHORIBOSYLTRANSFERASE"/>
    <property type="match status" value="1"/>
</dbReference>
<dbReference type="PANTHER" id="PTHR21403">
    <property type="entry name" value="ATP PHOSPHORIBOSYLTRANSFERASE ATP-PRTASE"/>
    <property type="match status" value="1"/>
</dbReference>
<dbReference type="Pfam" id="PF01634">
    <property type="entry name" value="HisG"/>
    <property type="match status" value="1"/>
</dbReference>
<dbReference type="SUPFAM" id="SSF53850">
    <property type="entry name" value="Periplasmic binding protein-like II"/>
    <property type="match status" value="1"/>
</dbReference>
<dbReference type="PROSITE" id="PS01316">
    <property type="entry name" value="ATP_P_PHORIBOSYLTR"/>
    <property type="match status" value="1"/>
</dbReference>
<gene>
    <name evidence="1" type="primary">hisG</name>
    <name type="ordered locus">Suden_0889</name>
</gene>
<comment type="function">
    <text evidence="1">Catalyzes the condensation of ATP and 5-phosphoribose 1-diphosphate to form N'-(5'-phosphoribosyl)-ATP (PR-ATP). Has a crucial role in the pathway because the rate of histidine biosynthesis seems to be controlled primarily by regulation of HisG enzymatic activity.</text>
</comment>
<comment type="catalytic activity">
    <reaction evidence="1">
        <text>1-(5-phospho-beta-D-ribosyl)-ATP + diphosphate = 5-phospho-alpha-D-ribose 1-diphosphate + ATP</text>
        <dbReference type="Rhea" id="RHEA:18473"/>
        <dbReference type="ChEBI" id="CHEBI:30616"/>
        <dbReference type="ChEBI" id="CHEBI:33019"/>
        <dbReference type="ChEBI" id="CHEBI:58017"/>
        <dbReference type="ChEBI" id="CHEBI:73183"/>
        <dbReference type="EC" id="2.4.2.17"/>
    </reaction>
</comment>
<comment type="pathway">
    <text evidence="1">Amino-acid biosynthesis; L-histidine biosynthesis; L-histidine from 5-phospho-alpha-D-ribose 1-diphosphate: step 1/9.</text>
</comment>
<comment type="subunit">
    <text evidence="1">Heteromultimer composed of HisG and HisZ subunits.</text>
</comment>
<comment type="subcellular location">
    <subcellularLocation>
        <location evidence="1">Cytoplasm</location>
    </subcellularLocation>
</comment>
<comment type="domain">
    <text>Lacks the C-terminal regulatory region which is replaced by HisZ.</text>
</comment>
<comment type="similarity">
    <text evidence="1">Belongs to the ATP phosphoribosyltransferase family. Short subfamily.</text>
</comment>